<dbReference type="EMBL" id="CP001348">
    <property type="protein sequence ID" value="ACL74824.1"/>
    <property type="molecule type" value="Genomic_DNA"/>
</dbReference>
<dbReference type="RefSeq" id="WP_012634886.1">
    <property type="nucleotide sequence ID" value="NC_011898.1"/>
</dbReference>
<dbReference type="SMR" id="B8I6D2"/>
<dbReference type="STRING" id="394503.Ccel_0442"/>
<dbReference type="KEGG" id="cce:Ccel_0442"/>
<dbReference type="eggNOG" id="COG0052">
    <property type="taxonomic scope" value="Bacteria"/>
</dbReference>
<dbReference type="HOGENOM" id="CLU_040318_1_2_9"/>
<dbReference type="OrthoDB" id="9808036at2"/>
<dbReference type="Proteomes" id="UP000001349">
    <property type="component" value="Chromosome"/>
</dbReference>
<dbReference type="GO" id="GO:0022627">
    <property type="term" value="C:cytosolic small ribosomal subunit"/>
    <property type="evidence" value="ECO:0007669"/>
    <property type="project" value="TreeGrafter"/>
</dbReference>
<dbReference type="GO" id="GO:0003735">
    <property type="term" value="F:structural constituent of ribosome"/>
    <property type="evidence" value="ECO:0007669"/>
    <property type="project" value="InterPro"/>
</dbReference>
<dbReference type="GO" id="GO:0006412">
    <property type="term" value="P:translation"/>
    <property type="evidence" value="ECO:0007669"/>
    <property type="project" value="UniProtKB-UniRule"/>
</dbReference>
<dbReference type="CDD" id="cd01425">
    <property type="entry name" value="RPS2"/>
    <property type="match status" value="1"/>
</dbReference>
<dbReference type="FunFam" id="1.10.287.610:FF:000001">
    <property type="entry name" value="30S ribosomal protein S2"/>
    <property type="match status" value="1"/>
</dbReference>
<dbReference type="Gene3D" id="3.40.50.10490">
    <property type="entry name" value="Glucose-6-phosphate isomerase like protein, domain 1"/>
    <property type="match status" value="1"/>
</dbReference>
<dbReference type="Gene3D" id="1.10.287.610">
    <property type="entry name" value="Helix hairpin bin"/>
    <property type="match status" value="1"/>
</dbReference>
<dbReference type="HAMAP" id="MF_00291_B">
    <property type="entry name" value="Ribosomal_uS2_B"/>
    <property type="match status" value="1"/>
</dbReference>
<dbReference type="InterPro" id="IPR001865">
    <property type="entry name" value="Ribosomal_uS2"/>
</dbReference>
<dbReference type="InterPro" id="IPR005706">
    <property type="entry name" value="Ribosomal_uS2_bac/mit/plastid"/>
</dbReference>
<dbReference type="InterPro" id="IPR018130">
    <property type="entry name" value="Ribosomal_uS2_CS"/>
</dbReference>
<dbReference type="InterPro" id="IPR023591">
    <property type="entry name" value="Ribosomal_uS2_flav_dom_sf"/>
</dbReference>
<dbReference type="NCBIfam" id="TIGR01011">
    <property type="entry name" value="rpsB_bact"/>
    <property type="match status" value="1"/>
</dbReference>
<dbReference type="PANTHER" id="PTHR12534">
    <property type="entry name" value="30S RIBOSOMAL PROTEIN S2 PROKARYOTIC AND ORGANELLAR"/>
    <property type="match status" value="1"/>
</dbReference>
<dbReference type="PANTHER" id="PTHR12534:SF0">
    <property type="entry name" value="SMALL RIBOSOMAL SUBUNIT PROTEIN US2M"/>
    <property type="match status" value="1"/>
</dbReference>
<dbReference type="Pfam" id="PF00318">
    <property type="entry name" value="Ribosomal_S2"/>
    <property type="match status" value="1"/>
</dbReference>
<dbReference type="PRINTS" id="PR00395">
    <property type="entry name" value="RIBOSOMALS2"/>
</dbReference>
<dbReference type="SUPFAM" id="SSF52313">
    <property type="entry name" value="Ribosomal protein S2"/>
    <property type="match status" value="1"/>
</dbReference>
<dbReference type="PROSITE" id="PS00962">
    <property type="entry name" value="RIBOSOMAL_S2_1"/>
    <property type="match status" value="1"/>
</dbReference>
<dbReference type="PROSITE" id="PS00963">
    <property type="entry name" value="RIBOSOMAL_S2_2"/>
    <property type="match status" value="1"/>
</dbReference>
<gene>
    <name evidence="1" type="primary">rpsB</name>
    <name type="ordered locus">Ccel_0442</name>
</gene>
<organism>
    <name type="scientific">Ruminiclostridium cellulolyticum (strain ATCC 35319 / DSM 5812 / JCM 6584 / H10)</name>
    <name type="common">Clostridium cellulolyticum</name>
    <dbReference type="NCBI Taxonomy" id="394503"/>
    <lineage>
        <taxon>Bacteria</taxon>
        <taxon>Bacillati</taxon>
        <taxon>Bacillota</taxon>
        <taxon>Clostridia</taxon>
        <taxon>Eubacteriales</taxon>
        <taxon>Oscillospiraceae</taxon>
        <taxon>Ruminiclostridium</taxon>
    </lineage>
</organism>
<reference key="1">
    <citation type="submission" date="2009-01" db="EMBL/GenBank/DDBJ databases">
        <title>Complete sequence of Clostridium cellulolyticum H10.</title>
        <authorList>
            <consortium name="US DOE Joint Genome Institute"/>
            <person name="Lucas S."/>
            <person name="Copeland A."/>
            <person name="Lapidus A."/>
            <person name="Glavina del Rio T."/>
            <person name="Dalin E."/>
            <person name="Tice H."/>
            <person name="Bruce D."/>
            <person name="Goodwin L."/>
            <person name="Pitluck S."/>
            <person name="Chertkov O."/>
            <person name="Saunders E."/>
            <person name="Brettin T."/>
            <person name="Detter J.C."/>
            <person name="Han C."/>
            <person name="Larimer F."/>
            <person name="Land M."/>
            <person name="Hauser L."/>
            <person name="Kyrpides N."/>
            <person name="Ivanova N."/>
            <person name="Zhou J."/>
            <person name="Richardson P."/>
        </authorList>
    </citation>
    <scope>NUCLEOTIDE SEQUENCE [LARGE SCALE GENOMIC DNA]</scope>
    <source>
        <strain>ATCC 35319 / DSM 5812 / JCM 6584 / H10</strain>
    </source>
</reference>
<keyword id="KW-1185">Reference proteome</keyword>
<keyword id="KW-0687">Ribonucleoprotein</keyword>
<keyword id="KW-0689">Ribosomal protein</keyword>
<evidence type="ECO:0000255" key="1">
    <source>
        <dbReference type="HAMAP-Rule" id="MF_00291"/>
    </source>
</evidence>
<evidence type="ECO:0000305" key="2"/>
<sequence>MAVISMKQLLEAGVHFGHQTRRWNPKMAEYIFTERNGIYIIDLQKTVKKVDDAYFFIREIAMNGQDVLFVGTKKQAQDSIREEAERSGQFFVNNRWLGGMLTNFKTITKRINRLHQLNAMETDGTFEVLPKKEVSKLKKEMADLEKNLGGIKNMKKLPGAMFVVDPRKERNAILEAKRLGIPVVAIVDTNCDPDEVDFVIPGNDDAIRAVKLIAAKMADAVIEGRQGEQLAETPVETAEVAEEAQVAVEAAE</sequence>
<name>RS2_RUMCH</name>
<comment type="similarity">
    <text evidence="1">Belongs to the universal ribosomal protein uS2 family.</text>
</comment>
<accession>B8I6D2</accession>
<protein>
    <recommendedName>
        <fullName evidence="1">Small ribosomal subunit protein uS2</fullName>
    </recommendedName>
    <alternativeName>
        <fullName evidence="2">30S ribosomal protein S2</fullName>
    </alternativeName>
</protein>
<feature type="chain" id="PRO_1000194331" description="Small ribosomal subunit protein uS2">
    <location>
        <begin position="1"/>
        <end position="252"/>
    </location>
</feature>
<proteinExistence type="inferred from homology"/>